<proteinExistence type="evidence at protein level"/>
<reference evidence="9" key="1">
    <citation type="journal article" date="2004" name="Appl. Microbiol. Biotechnol.">
        <title>Cloning, expression, and characterization of a glycoside hydrolase family 86 beta-agarase from a deep-sea Microbulbifer-like isolate.</title>
        <authorList>
            <person name="Ohta Y."/>
            <person name="Hatada Y."/>
            <person name="Nogi Y."/>
            <person name="Li Z."/>
            <person name="Ito S."/>
            <person name="Horikoshi K."/>
        </authorList>
    </citation>
    <scope>NUCLEOTIDE SEQUENCE [GENOMIC DNA]</scope>
    <scope>PROTEIN SEQUENCE OF 479-488 AND 1167-1175</scope>
    <scope>FUNCTION</scope>
    <scope>CATALYTIC ACTIVITY</scope>
    <scope>ACTIVITY REGULATION</scope>
    <scope>BIOPHYSICOCHEMICAL PROPERTIES</scope>
    <source>
        <strain>DSM 19189 / JCM 14709 / JAMB A94</strain>
    </source>
</reference>
<reference evidence="10" key="2">
    <citation type="journal article" date="2011" name="Mar. Biotechnol.">
        <title>Hyper-production and characterization of the iota-carrageenase useful for iota-carrageenan oligosaccharide production from a deep-sea bacterium, Microbulbifer thermotolerans JAMB-A94T, and insight into the unusual catalytic mechanism.</title>
        <authorList>
            <person name="Hatada Y."/>
            <person name="Mizuno M."/>
            <person name="Li Z."/>
            <person name="Ohta Y."/>
        </authorList>
    </citation>
    <scope>NUCLEOTIDE SEQUENCE [GENOMIC DNA]</scope>
    <source>
        <strain>DSM 19189 / JCM 14709 / JAMB A94</strain>
    </source>
</reference>
<keyword id="KW-0903">Direct protein sequencing</keyword>
<keyword id="KW-0326">Glycosidase</keyword>
<keyword id="KW-0378">Hydrolase</keyword>
<keyword id="KW-0677">Repeat</keyword>
<keyword id="KW-0732">Signal</keyword>
<gene>
    <name evidence="6 7" type="primary">agaO</name>
</gene>
<comment type="function">
    <text evidence="5">Endo-type beta-agarase, which degrades agarose and agarose oligosaccharides more polymerized than hexamers to yield neoagarohexaose (NA6) as the main product, with lesser amounts of neoagarotetraose (NA4) and neoagarobiose (NA2).</text>
</comment>
<comment type="catalytic activity">
    <reaction evidence="5">
        <text>Hydrolysis of (1-&gt;4)-beta-D-galactosidic linkages in agarose, giving the tetramer as the predominant product.</text>
        <dbReference type="EC" id="3.2.1.81"/>
    </reaction>
</comment>
<comment type="activity regulation">
    <text evidence="5">Activity and stability are strongly enhanced by CaCl(2) (PubMed:15490156). Activity is not affected by sulfhydryl inhibitors such as iodoacetoamide and p-chloromercuribenzoate or by thiol reagents such as dithiothreitol and 2-mercaptoethanol (PubMed:15490156). Strongly inhibited by N-bromosuccinimide and sodium dodecyl sulfate (PubMed:15490156).</text>
</comment>
<comment type="biophysicochemical properties">
    <phDependence>
        <text evidence="5">Optimum pH is 7.5.</text>
    </phDependence>
    <temperatureDependence>
        <text evidence="5">Optimum temperature is 45 degrees Celsius.</text>
    </temperatureDependence>
</comment>
<comment type="miscellaneous">
    <text evidence="5">Recombinant agarase was produced extracellularly using B.subtilis as a host (PubMed:15490156). The amino acid sequence of the recombinant enzyme expressed in B.subtilis starts with amino acid Gln-479 and ends with His-1175, probably due to proteolytic cleavage (PubMed:15490156).</text>
</comment>
<comment type="similarity">
    <text evidence="8">Belongs to the glycosyl hydrolase 86 family.</text>
</comment>
<feature type="signal peptide" evidence="2">
    <location>
        <begin position="1"/>
        <end position="29"/>
    </location>
</feature>
<feature type="chain" id="PRO_5010505626" description="Beta-agarase AgaO">
    <location>
        <begin position="30"/>
        <end position="1175"/>
    </location>
</feature>
<feature type="domain" description="CBM6 1" evidence="3">
    <location>
        <begin position="32"/>
        <end position="164"/>
    </location>
</feature>
<feature type="domain" description="CBM6 2" evidence="3">
    <location>
        <begin position="211"/>
        <end position="339"/>
    </location>
</feature>
<feature type="region of interest" description="Disordered" evidence="4">
    <location>
        <begin position="169"/>
        <end position="208"/>
    </location>
</feature>
<feature type="region of interest" description="Disordered" evidence="4">
    <location>
        <begin position="355"/>
        <end position="481"/>
    </location>
</feature>
<feature type="compositionally biased region" description="Low complexity" evidence="4">
    <location>
        <begin position="178"/>
        <end position="200"/>
    </location>
</feature>
<feature type="compositionally biased region" description="Basic and acidic residues" evidence="4">
    <location>
        <begin position="382"/>
        <end position="393"/>
    </location>
</feature>
<feature type="compositionally biased region" description="Polar residues" evidence="4">
    <location>
        <begin position="471"/>
        <end position="481"/>
    </location>
</feature>
<feature type="active site" description="Proton donor" evidence="1">
    <location>
        <position position="661"/>
    </location>
</feature>
<feature type="active site" description="Nucleophile" evidence="1">
    <location>
        <position position="832"/>
    </location>
</feature>
<protein>
    <recommendedName>
        <fullName evidence="6">Beta-agarase AgaO</fullName>
        <ecNumber evidence="5">3.2.1.81</ecNumber>
    </recommendedName>
</protein>
<organism>
    <name type="scientific">Microbulbifer thermotolerans</name>
    <dbReference type="NCBI Taxonomy" id="252514"/>
    <lineage>
        <taxon>Bacteria</taxon>
        <taxon>Pseudomonadati</taxon>
        <taxon>Pseudomonadota</taxon>
        <taxon>Gammaproteobacteria</taxon>
        <taxon>Cellvibrionales</taxon>
        <taxon>Microbulbiferaceae</taxon>
        <taxon>Microbulbifer</taxon>
    </lineage>
</organism>
<sequence length="1175" mass="129802">MRLSKSQGILPLAHAVLAAAIAYSTAATAADYRLEAEDFTNVGGTYNDGQPQKISVYTVNGITAINYVNKGDYAEYTLSVPQAGQYDLTYFAGTAIDGARIDFQVNNNGSWQTLARTDVPNAGWDNFQPLPAGSIHLSSGSQQIRLFGGGDHDWQWNLDKMELAYIDDSSSSSGGGSTSSSSSGGSSSSSGSGSSSSGGSPEEGGHVSGTFKLEAESAHHVGGEIDTYAINGGVAVNYFNSGDYLEYNLHLDQSGLYRPKYYVSTAHSSGVAVGLMATDHEGALVTKNTSEVQSQGGWDSFYLLNAASDINLFSGDLTIRIYGAGTQDFQFNIDYVIFERISDVDLDLDGDSDGIADVNDSCPGTDPSETANSEGCAPSQLDTDKDGIADNRDQCPTTAPGDFVDSEGCASTGADDDDLDGIANQEDQCPDTPFGENVAPSGCTGFEDSDSDGIANGTDQCPSTPAKEFTNESGCSPSQVANPHSVKVTVNANIKHSVKGISDFGRNRHITAHTTIYEKDWEGHADKLNYLVNTLDVTLGRDNGTATWKFQDTKEDPNRENWPDLDYMVTRGKELRENYEANPFYKRFSADRTELIAGTNPHPTYPTLSWNANGSTWHDWQPMHIETSAAWMGQYLKHYYANSSNGYIGDPMPKFWEVINEPDMEMKTGKFMVTNQEAIWEYHNLVAQEIRSKLGNEAPLIGGMTWGQHDFYRRDGISRYADNAYDQWIVADDPAEEAAAEEFFRQAMATTVDDTRDQNWYQWDVMWKGFMDAAGHNMDFYSVHVYDWPGVNSDAKSTLRRNGHLPAMLDMIEWYDVYQNGQANRKPIVISEYGAVQGGWNTLAHQPRFESEVLKSFNAMLMQILERPDYVIKSMPFTPAKPLWGYYPGGCGYEEVRNCTAPYHYSLLIEPVLNSDNWQWSDYIKFYELWADIDGTRVDSVSSDPDVQVQSYVNNNELFIIINNLETVDTTIDLTVAGLNNAQLQNVELRNMHFDNNFDTQLERHHMKQMPTKVTLAADATLVLRYTLNSTIAINQSVDEKKYFGNSVSGGSVPHRISVAGGAKNLQVNNVSVPSGYAESQLRLTVALYPSQDDTPDSLLQIDTLTINGHTIETPIDWRGRKENSVERYFNTLEIPVPVDVLQKNNTISVDFRHNGELTVANLVIKEYTTTPVRH</sequence>
<evidence type="ECO:0000250" key="1">
    <source>
        <dbReference type="UniProtKB" id="B5CY96"/>
    </source>
</evidence>
<evidence type="ECO:0000255" key="2"/>
<evidence type="ECO:0000255" key="3">
    <source>
        <dbReference type="PROSITE-ProRule" id="PRU00523"/>
    </source>
</evidence>
<evidence type="ECO:0000256" key="4">
    <source>
        <dbReference type="SAM" id="MobiDB-lite"/>
    </source>
</evidence>
<evidence type="ECO:0000269" key="5">
    <source>
    </source>
</evidence>
<evidence type="ECO:0000303" key="6">
    <source>
    </source>
</evidence>
<evidence type="ECO:0000303" key="7">
    <source>
    </source>
</evidence>
<evidence type="ECO:0000305" key="8">
    <source>
    </source>
</evidence>
<evidence type="ECO:0000312" key="9">
    <source>
        <dbReference type="EMBL" id="BAD86832.1"/>
    </source>
</evidence>
<evidence type="ECO:0000312" key="10">
    <source>
        <dbReference type="EMBL" id="BAK08903.1"/>
    </source>
</evidence>
<accession>Q5KTI5</accession>
<dbReference type="EC" id="3.2.1.81" evidence="5"/>
<dbReference type="EMBL" id="AB160954">
    <property type="protein sequence ID" value="BAD86832.1"/>
    <property type="molecule type" value="Genomic_DNA"/>
</dbReference>
<dbReference type="EMBL" id="AB516430">
    <property type="protein sequence ID" value="BAK08903.1"/>
    <property type="molecule type" value="Genomic_DNA"/>
</dbReference>
<dbReference type="RefSeq" id="WP_083421171.1">
    <property type="nucleotide sequence ID" value="NZ_FOKT01000006.1"/>
</dbReference>
<dbReference type="SMR" id="Q5KTI5"/>
<dbReference type="CAZy" id="CBM6">
    <property type="family name" value="Carbohydrate-Binding Module Family 6"/>
</dbReference>
<dbReference type="CAZy" id="GH86">
    <property type="family name" value="Glycoside Hydrolase Family 86"/>
</dbReference>
<dbReference type="GO" id="GO:0005509">
    <property type="term" value="F:calcium ion binding"/>
    <property type="evidence" value="ECO:0007669"/>
    <property type="project" value="InterPro"/>
</dbReference>
<dbReference type="GO" id="GO:0030246">
    <property type="term" value="F:carbohydrate binding"/>
    <property type="evidence" value="ECO:0007669"/>
    <property type="project" value="InterPro"/>
</dbReference>
<dbReference type="GO" id="GO:0016798">
    <property type="term" value="F:hydrolase activity, acting on glycosyl bonds"/>
    <property type="evidence" value="ECO:0007669"/>
    <property type="project" value="UniProtKB-KW"/>
</dbReference>
<dbReference type="GO" id="GO:0007155">
    <property type="term" value="P:cell adhesion"/>
    <property type="evidence" value="ECO:0007669"/>
    <property type="project" value="InterPro"/>
</dbReference>
<dbReference type="CDD" id="cd21510">
    <property type="entry name" value="agarase_cat"/>
    <property type="match status" value="1"/>
</dbReference>
<dbReference type="CDD" id="cd04079">
    <property type="entry name" value="CBM6_agarase-like"/>
    <property type="match status" value="2"/>
</dbReference>
<dbReference type="Gene3D" id="2.60.120.1200">
    <property type="match status" value="1"/>
</dbReference>
<dbReference type="Gene3D" id="2.60.120.260">
    <property type="entry name" value="Galactose-binding domain-like"/>
    <property type="match status" value="2"/>
</dbReference>
<dbReference type="Gene3D" id="3.20.20.80">
    <property type="entry name" value="Glycosidases"/>
    <property type="match status" value="1"/>
</dbReference>
<dbReference type="Gene3D" id="4.10.1080.10">
    <property type="entry name" value="TSP type-3 repeat"/>
    <property type="match status" value="1"/>
</dbReference>
<dbReference type="InterPro" id="IPR041224">
    <property type="entry name" value="BPA_C"/>
</dbReference>
<dbReference type="InterPro" id="IPR005084">
    <property type="entry name" value="CBM6"/>
</dbReference>
<dbReference type="InterPro" id="IPR006584">
    <property type="entry name" value="Cellulose-bd_IV"/>
</dbReference>
<dbReference type="InterPro" id="IPR008979">
    <property type="entry name" value="Galactose-bd-like_sf"/>
</dbReference>
<dbReference type="InterPro" id="IPR017853">
    <property type="entry name" value="Glycoside_hydrolase_SF"/>
</dbReference>
<dbReference type="InterPro" id="IPR040527">
    <property type="entry name" value="Porphyrn_b-sand_dom_1"/>
</dbReference>
<dbReference type="InterPro" id="IPR003367">
    <property type="entry name" value="Thrombospondin_3-like_rpt"/>
</dbReference>
<dbReference type="InterPro" id="IPR028974">
    <property type="entry name" value="TSP_type-3_rpt"/>
</dbReference>
<dbReference type="Pfam" id="PF18040">
    <property type="entry name" value="BPA_C"/>
    <property type="match status" value="1"/>
</dbReference>
<dbReference type="Pfam" id="PF03422">
    <property type="entry name" value="CBM_6"/>
    <property type="match status" value="2"/>
</dbReference>
<dbReference type="Pfam" id="PF18206">
    <property type="entry name" value="Porphyrn_cat_1"/>
    <property type="match status" value="1"/>
</dbReference>
<dbReference type="Pfam" id="PF02412">
    <property type="entry name" value="TSP_3"/>
    <property type="match status" value="1"/>
</dbReference>
<dbReference type="SMART" id="SM00606">
    <property type="entry name" value="CBD_IV"/>
    <property type="match status" value="2"/>
</dbReference>
<dbReference type="SUPFAM" id="SSF51445">
    <property type="entry name" value="(Trans)glycosidases"/>
    <property type="match status" value="1"/>
</dbReference>
<dbReference type="SUPFAM" id="SSF49785">
    <property type="entry name" value="Galactose-binding domain-like"/>
    <property type="match status" value="2"/>
</dbReference>
<dbReference type="SUPFAM" id="SSF103647">
    <property type="entry name" value="TSP type-3 repeat"/>
    <property type="match status" value="1"/>
</dbReference>
<dbReference type="PROSITE" id="PS51175">
    <property type="entry name" value="CBM6"/>
    <property type="match status" value="2"/>
</dbReference>
<name>AGAO_MICTH</name>